<keyword id="KW-0963">Cytoplasm</keyword>
<keyword id="KW-0378">Hydrolase</keyword>
<keyword id="KW-0694">RNA-binding</keyword>
<keyword id="KW-0820">tRNA-binding</keyword>
<protein>
    <recommendedName>
        <fullName evidence="1">D-aminoacyl-tRNA deacylase</fullName>
        <shortName evidence="1">DTD</shortName>
        <ecNumber evidence="1">3.1.1.96</ecNumber>
    </recommendedName>
    <alternativeName>
        <fullName evidence="1">Gly-tRNA(Ala) deacylase</fullName>
    </alternativeName>
</protein>
<proteinExistence type="inferred from homology"/>
<name>DTD_BURVG</name>
<feature type="chain" id="PRO_1000050820" description="D-aminoacyl-tRNA deacylase">
    <location>
        <begin position="1"/>
        <end position="152"/>
    </location>
</feature>
<feature type="short sequence motif" description="Gly-cisPro motif, important for rejection of L-amino acids" evidence="1">
    <location>
        <begin position="142"/>
        <end position="143"/>
    </location>
</feature>
<comment type="function">
    <text evidence="1">An aminoacyl-tRNA editing enzyme that deacylates mischarged D-aminoacyl-tRNAs. Also deacylates mischarged glycyl-tRNA(Ala), protecting cells against glycine mischarging by AlaRS. Acts via tRNA-based rather than protein-based catalysis; rejects L-amino acids rather than detecting D-amino acids in the active site. By recycling D-aminoacyl-tRNA to D-amino acids and free tRNA molecules, this enzyme counteracts the toxicity associated with the formation of D-aminoacyl-tRNA entities in vivo and helps enforce protein L-homochirality.</text>
</comment>
<comment type="catalytic activity">
    <reaction evidence="1">
        <text>glycyl-tRNA(Ala) + H2O = tRNA(Ala) + glycine + H(+)</text>
        <dbReference type="Rhea" id="RHEA:53744"/>
        <dbReference type="Rhea" id="RHEA-COMP:9657"/>
        <dbReference type="Rhea" id="RHEA-COMP:13640"/>
        <dbReference type="ChEBI" id="CHEBI:15377"/>
        <dbReference type="ChEBI" id="CHEBI:15378"/>
        <dbReference type="ChEBI" id="CHEBI:57305"/>
        <dbReference type="ChEBI" id="CHEBI:78442"/>
        <dbReference type="ChEBI" id="CHEBI:78522"/>
        <dbReference type="EC" id="3.1.1.96"/>
    </reaction>
</comment>
<comment type="catalytic activity">
    <reaction evidence="1">
        <text>a D-aminoacyl-tRNA + H2O = a tRNA + a D-alpha-amino acid + H(+)</text>
        <dbReference type="Rhea" id="RHEA:13953"/>
        <dbReference type="Rhea" id="RHEA-COMP:10123"/>
        <dbReference type="Rhea" id="RHEA-COMP:10124"/>
        <dbReference type="ChEBI" id="CHEBI:15377"/>
        <dbReference type="ChEBI" id="CHEBI:15378"/>
        <dbReference type="ChEBI" id="CHEBI:59871"/>
        <dbReference type="ChEBI" id="CHEBI:78442"/>
        <dbReference type="ChEBI" id="CHEBI:79333"/>
        <dbReference type="EC" id="3.1.1.96"/>
    </reaction>
</comment>
<comment type="subunit">
    <text evidence="1">Homodimer.</text>
</comment>
<comment type="subcellular location">
    <subcellularLocation>
        <location evidence="1">Cytoplasm</location>
    </subcellularLocation>
</comment>
<comment type="domain">
    <text evidence="1">A Gly-cisPro motif from one monomer fits into the active site of the other monomer to allow specific chiral rejection of L-amino acids.</text>
</comment>
<comment type="similarity">
    <text evidence="1">Belongs to the DTD family.</text>
</comment>
<reference key="1">
    <citation type="submission" date="2007-03" db="EMBL/GenBank/DDBJ databases">
        <title>Complete sequence of chromosome 1 of Burkholderia vietnamiensis G4.</title>
        <authorList>
            <consortium name="US DOE Joint Genome Institute"/>
            <person name="Copeland A."/>
            <person name="Lucas S."/>
            <person name="Lapidus A."/>
            <person name="Barry K."/>
            <person name="Detter J.C."/>
            <person name="Glavina del Rio T."/>
            <person name="Hammon N."/>
            <person name="Israni S."/>
            <person name="Dalin E."/>
            <person name="Tice H."/>
            <person name="Pitluck S."/>
            <person name="Chain P."/>
            <person name="Malfatti S."/>
            <person name="Shin M."/>
            <person name="Vergez L."/>
            <person name="Schmutz J."/>
            <person name="Larimer F."/>
            <person name="Land M."/>
            <person name="Hauser L."/>
            <person name="Kyrpides N."/>
            <person name="Tiedje J."/>
            <person name="Richardson P."/>
        </authorList>
    </citation>
    <scope>NUCLEOTIDE SEQUENCE [LARGE SCALE GENOMIC DNA]</scope>
    <source>
        <strain>G4 / LMG 22486</strain>
    </source>
</reference>
<evidence type="ECO:0000255" key="1">
    <source>
        <dbReference type="HAMAP-Rule" id="MF_00518"/>
    </source>
</evidence>
<dbReference type="EC" id="3.1.1.96" evidence="1"/>
<dbReference type="EMBL" id="CP000614">
    <property type="protein sequence ID" value="ABO53662.1"/>
    <property type="molecule type" value="Genomic_DNA"/>
</dbReference>
<dbReference type="SMR" id="A4JBK9"/>
<dbReference type="KEGG" id="bvi:Bcep1808_0650"/>
<dbReference type="eggNOG" id="COG1490">
    <property type="taxonomic scope" value="Bacteria"/>
</dbReference>
<dbReference type="HOGENOM" id="CLU_076901_1_1_4"/>
<dbReference type="Proteomes" id="UP000002287">
    <property type="component" value="Chromosome 1"/>
</dbReference>
<dbReference type="GO" id="GO:0005737">
    <property type="term" value="C:cytoplasm"/>
    <property type="evidence" value="ECO:0007669"/>
    <property type="project" value="UniProtKB-SubCell"/>
</dbReference>
<dbReference type="GO" id="GO:0051500">
    <property type="term" value="F:D-tyrosyl-tRNA(Tyr) deacylase activity"/>
    <property type="evidence" value="ECO:0007669"/>
    <property type="project" value="TreeGrafter"/>
</dbReference>
<dbReference type="GO" id="GO:0106026">
    <property type="term" value="F:Gly-tRNA(Ala) deacylase activity"/>
    <property type="evidence" value="ECO:0007669"/>
    <property type="project" value="UniProtKB-UniRule"/>
</dbReference>
<dbReference type="GO" id="GO:0043908">
    <property type="term" value="F:Ser(Gly)-tRNA(Ala) hydrolase activity"/>
    <property type="evidence" value="ECO:0007669"/>
    <property type="project" value="UniProtKB-UniRule"/>
</dbReference>
<dbReference type="GO" id="GO:0000049">
    <property type="term" value="F:tRNA binding"/>
    <property type="evidence" value="ECO:0007669"/>
    <property type="project" value="UniProtKB-UniRule"/>
</dbReference>
<dbReference type="GO" id="GO:0019478">
    <property type="term" value="P:D-amino acid catabolic process"/>
    <property type="evidence" value="ECO:0007669"/>
    <property type="project" value="UniProtKB-UniRule"/>
</dbReference>
<dbReference type="CDD" id="cd00563">
    <property type="entry name" value="Dtyr_deacylase"/>
    <property type="match status" value="1"/>
</dbReference>
<dbReference type="FunFam" id="3.50.80.10:FF:000001">
    <property type="entry name" value="D-aminoacyl-tRNA deacylase"/>
    <property type="match status" value="1"/>
</dbReference>
<dbReference type="Gene3D" id="3.50.80.10">
    <property type="entry name" value="D-tyrosyl-tRNA(Tyr) deacylase"/>
    <property type="match status" value="1"/>
</dbReference>
<dbReference type="HAMAP" id="MF_00518">
    <property type="entry name" value="Deacylase_Dtd"/>
    <property type="match status" value="1"/>
</dbReference>
<dbReference type="InterPro" id="IPR003732">
    <property type="entry name" value="Daa-tRNA_deacyls_DTD"/>
</dbReference>
<dbReference type="InterPro" id="IPR023509">
    <property type="entry name" value="DTD-like_sf"/>
</dbReference>
<dbReference type="NCBIfam" id="TIGR00256">
    <property type="entry name" value="D-aminoacyl-tRNA deacylase"/>
    <property type="match status" value="1"/>
</dbReference>
<dbReference type="PANTHER" id="PTHR10472:SF5">
    <property type="entry name" value="D-AMINOACYL-TRNA DEACYLASE 1"/>
    <property type="match status" value="1"/>
</dbReference>
<dbReference type="PANTHER" id="PTHR10472">
    <property type="entry name" value="D-TYROSYL-TRNA TYR DEACYLASE"/>
    <property type="match status" value="1"/>
</dbReference>
<dbReference type="Pfam" id="PF02580">
    <property type="entry name" value="Tyr_Deacylase"/>
    <property type="match status" value="1"/>
</dbReference>
<dbReference type="SUPFAM" id="SSF69500">
    <property type="entry name" value="DTD-like"/>
    <property type="match status" value="1"/>
</dbReference>
<sequence>MIALIQRVKRADVQVGERTTGEIGAGLLALVCAERGDTEAAADKLLAKLLGYRVFSDAAGKMNLPVSNIDGAGRAGGLLLVSQFTLAADTNSGLRPSFTPAAPPEEGKRLFDYFVAAARERHPIVETGEFGADMQVSLVNDGPVTFWLQVRP</sequence>
<organism>
    <name type="scientific">Burkholderia vietnamiensis (strain G4 / LMG 22486)</name>
    <name type="common">Burkholderia cepacia (strain R1808)</name>
    <dbReference type="NCBI Taxonomy" id="269482"/>
    <lineage>
        <taxon>Bacteria</taxon>
        <taxon>Pseudomonadati</taxon>
        <taxon>Pseudomonadota</taxon>
        <taxon>Betaproteobacteria</taxon>
        <taxon>Burkholderiales</taxon>
        <taxon>Burkholderiaceae</taxon>
        <taxon>Burkholderia</taxon>
        <taxon>Burkholderia cepacia complex</taxon>
    </lineage>
</organism>
<accession>A4JBK9</accession>
<gene>
    <name evidence="1" type="primary">dtd</name>
    <name type="ordered locus">Bcep1808_0650</name>
</gene>